<organism>
    <name type="scientific">Bacteroides fragilis (strain ATCC 25285 / DSM 2151 / CCUG 4856 / JCM 11019 / LMG 10263 / NCTC 9343 / Onslow / VPI 2553 / EN-2)</name>
    <dbReference type="NCBI Taxonomy" id="272559"/>
    <lineage>
        <taxon>Bacteria</taxon>
        <taxon>Pseudomonadati</taxon>
        <taxon>Bacteroidota</taxon>
        <taxon>Bacteroidia</taxon>
        <taxon>Bacteroidales</taxon>
        <taxon>Bacteroidaceae</taxon>
        <taxon>Bacteroides</taxon>
    </lineage>
</organism>
<name>RL33_BACFN</name>
<dbReference type="EMBL" id="CR626927">
    <property type="protein sequence ID" value="CAH08209.1"/>
    <property type="molecule type" value="Genomic_DNA"/>
</dbReference>
<dbReference type="RefSeq" id="WP_002560155.1">
    <property type="nucleotide sequence ID" value="NZ_UFTH01000001.1"/>
</dbReference>
<dbReference type="SMR" id="Q5LCF6"/>
<dbReference type="PaxDb" id="272559-BF9343_2428"/>
<dbReference type="GeneID" id="93117417"/>
<dbReference type="KEGG" id="bfs:BF9343_2428"/>
<dbReference type="eggNOG" id="COG0267">
    <property type="taxonomic scope" value="Bacteria"/>
</dbReference>
<dbReference type="HOGENOM" id="CLU_190949_3_0_10"/>
<dbReference type="Proteomes" id="UP000006731">
    <property type="component" value="Chromosome"/>
</dbReference>
<dbReference type="GO" id="GO:0005737">
    <property type="term" value="C:cytoplasm"/>
    <property type="evidence" value="ECO:0007669"/>
    <property type="project" value="UniProtKB-ARBA"/>
</dbReference>
<dbReference type="GO" id="GO:1990904">
    <property type="term" value="C:ribonucleoprotein complex"/>
    <property type="evidence" value="ECO:0007669"/>
    <property type="project" value="UniProtKB-KW"/>
</dbReference>
<dbReference type="GO" id="GO:0005840">
    <property type="term" value="C:ribosome"/>
    <property type="evidence" value="ECO:0007669"/>
    <property type="project" value="UniProtKB-KW"/>
</dbReference>
<dbReference type="GO" id="GO:0003735">
    <property type="term" value="F:structural constituent of ribosome"/>
    <property type="evidence" value="ECO:0007669"/>
    <property type="project" value="InterPro"/>
</dbReference>
<dbReference type="GO" id="GO:0006412">
    <property type="term" value="P:translation"/>
    <property type="evidence" value="ECO:0007669"/>
    <property type="project" value="UniProtKB-UniRule"/>
</dbReference>
<dbReference type="Gene3D" id="2.20.28.120">
    <property type="entry name" value="Ribosomal protein L33"/>
    <property type="match status" value="1"/>
</dbReference>
<dbReference type="HAMAP" id="MF_00294">
    <property type="entry name" value="Ribosomal_bL33"/>
    <property type="match status" value="1"/>
</dbReference>
<dbReference type="InterPro" id="IPR001705">
    <property type="entry name" value="Ribosomal_bL33"/>
</dbReference>
<dbReference type="InterPro" id="IPR038584">
    <property type="entry name" value="Ribosomal_bL33_sf"/>
</dbReference>
<dbReference type="InterPro" id="IPR011332">
    <property type="entry name" value="Ribosomal_zn-bd"/>
</dbReference>
<dbReference type="NCBIfam" id="NF001764">
    <property type="entry name" value="PRK00504.1"/>
    <property type="match status" value="1"/>
</dbReference>
<dbReference type="NCBIfam" id="NF001860">
    <property type="entry name" value="PRK00595.1"/>
    <property type="match status" value="1"/>
</dbReference>
<dbReference type="NCBIfam" id="TIGR01023">
    <property type="entry name" value="rpmG_bact"/>
    <property type="match status" value="1"/>
</dbReference>
<dbReference type="PANTHER" id="PTHR43168">
    <property type="entry name" value="50S RIBOSOMAL PROTEIN L33, CHLOROPLASTIC"/>
    <property type="match status" value="1"/>
</dbReference>
<dbReference type="PANTHER" id="PTHR43168:SF2">
    <property type="entry name" value="LARGE RIBOSOMAL SUBUNIT PROTEIN BL33C"/>
    <property type="match status" value="1"/>
</dbReference>
<dbReference type="Pfam" id="PF00471">
    <property type="entry name" value="Ribosomal_L33"/>
    <property type="match status" value="1"/>
</dbReference>
<dbReference type="SUPFAM" id="SSF57829">
    <property type="entry name" value="Zn-binding ribosomal proteins"/>
    <property type="match status" value="1"/>
</dbReference>
<reference key="1">
    <citation type="journal article" date="2005" name="Science">
        <title>Extensive DNA inversions in the B. fragilis genome control variable gene expression.</title>
        <authorList>
            <person name="Cerdeno-Tarraga A.-M."/>
            <person name="Patrick S."/>
            <person name="Crossman L.C."/>
            <person name="Blakely G."/>
            <person name="Abratt V."/>
            <person name="Lennard N."/>
            <person name="Poxton I."/>
            <person name="Duerden B."/>
            <person name="Harris B."/>
            <person name="Quail M.A."/>
            <person name="Barron A."/>
            <person name="Clark L."/>
            <person name="Corton C."/>
            <person name="Doggett J."/>
            <person name="Holden M.T.G."/>
            <person name="Larke N."/>
            <person name="Line A."/>
            <person name="Lord A."/>
            <person name="Norbertczak H."/>
            <person name="Ormond D."/>
            <person name="Price C."/>
            <person name="Rabbinowitsch E."/>
            <person name="Woodward J."/>
            <person name="Barrell B.G."/>
            <person name="Parkhill J."/>
        </authorList>
    </citation>
    <scope>NUCLEOTIDE SEQUENCE [LARGE SCALE GENOMIC DNA]</scope>
    <source>
        <strain>ATCC 25285 / DSM 2151 / CCUG 4856 / JCM 11019 / LMG 10263 / NCTC 9343 / Onslow / VPI 2553 / EN-2</strain>
    </source>
</reference>
<keyword id="KW-0687">Ribonucleoprotein</keyword>
<keyword id="KW-0689">Ribosomal protein</keyword>
<comment type="similarity">
    <text evidence="1">Belongs to the bacterial ribosomal protein bL33 family.</text>
</comment>
<feature type="chain" id="PRO_1000059268" description="Large ribosomal subunit protein bL33">
    <location>
        <begin position="1"/>
        <end position="62"/>
    </location>
</feature>
<proteinExistence type="inferred from homology"/>
<sequence>MAKKAKGNRVQVILECTEHKDSGMPGTSRYITTKNRKNTTERLELKKYNPILKRVTVHKEIK</sequence>
<protein>
    <recommendedName>
        <fullName evidence="1">Large ribosomal subunit protein bL33</fullName>
    </recommendedName>
    <alternativeName>
        <fullName evidence="2">50S ribosomal protein L33</fullName>
    </alternativeName>
</protein>
<gene>
    <name evidence="1" type="primary">rpmG</name>
    <name type="ordered locus">BF2509</name>
</gene>
<evidence type="ECO:0000255" key="1">
    <source>
        <dbReference type="HAMAP-Rule" id="MF_00294"/>
    </source>
</evidence>
<evidence type="ECO:0000305" key="2"/>
<accession>Q5LCF6</accession>